<evidence type="ECO:0000250" key="1"/>
<evidence type="ECO:0000255" key="2"/>
<evidence type="ECO:0000305" key="3"/>
<keyword id="KW-1015">Disulfide bond</keyword>
<keyword id="KW-0960">Knottin</keyword>
<keyword id="KW-0528">Neurotoxin</keyword>
<keyword id="KW-0964">Secreted</keyword>
<keyword id="KW-0732">Signal</keyword>
<keyword id="KW-0800">Toxin</keyword>
<sequence length="75" mass="8280">MSGLEIMVLTLLLLVSMATSHQDGGEKQATQRDAINVRRRSITRTEACYEYCKEQNKTCCGISNGRPICVGGCIR</sequence>
<accession>Q9BP58</accession>
<organism>
    <name type="scientific">Conus ventricosus</name>
    <name type="common">Mediterranean cone</name>
    <dbReference type="NCBI Taxonomy" id="117992"/>
    <lineage>
        <taxon>Eukaryota</taxon>
        <taxon>Metazoa</taxon>
        <taxon>Spiralia</taxon>
        <taxon>Lophotrochozoa</taxon>
        <taxon>Mollusca</taxon>
        <taxon>Gastropoda</taxon>
        <taxon>Caenogastropoda</taxon>
        <taxon>Neogastropoda</taxon>
        <taxon>Conoidea</taxon>
        <taxon>Conidae</taxon>
        <taxon>Conus</taxon>
        <taxon>Lautoconus</taxon>
    </lineage>
</organism>
<dbReference type="EMBL" id="AF215080">
    <property type="protein sequence ID" value="AAG60508.1"/>
    <property type="molecule type" value="mRNA"/>
</dbReference>
<dbReference type="ConoServer" id="767">
    <property type="toxin name" value="Vn6.21 precursor"/>
</dbReference>
<dbReference type="GO" id="GO:0005576">
    <property type="term" value="C:extracellular region"/>
    <property type="evidence" value="ECO:0007669"/>
    <property type="project" value="UniProtKB-SubCell"/>
</dbReference>
<dbReference type="GO" id="GO:0008200">
    <property type="term" value="F:ion channel inhibitor activity"/>
    <property type="evidence" value="ECO:0007669"/>
    <property type="project" value="InterPro"/>
</dbReference>
<dbReference type="GO" id="GO:0090729">
    <property type="term" value="F:toxin activity"/>
    <property type="evidence" value="ECO:0007669"/>
    <property type="project" value="UniProtKB-KW"/>
</dbReference>
<dbReference type="InterPro" id="IPR004214">
    <property type="entry name" value="Conotoxin"/>
</dbReference>
<dbReference type="Pfam" id="PF02950">
    <property type="entry name" value="Conotoxin"/>
    <property type="match status" value="1"/>
</dbReference>
<comment type="subcellular location">
    <subcellularLocation>
        <location evidence="1">Secreted</location>
    </subcellularLocation>
</comment>
<comment type="tissue specificity">
    <text>Expressed by the venom duct.</text>
</comment>
<comment type="domain">
    <text evidence="1">The presence of a 'disulfide through disulfide knot' structurally defines this protein as a knottin.</text>
</comment>
<comment type="domain">
    <text>The cysteine framework is VI/VII (C-C-CC-C-C).</text>
</comment>
<comment type="similarity">
    <text evidence="3">Belongs to the conotoxin O3 superfamily.</text>
</comment>
<protein>
    <recommendedName>
        <fullName>Conotoxin VnMSGL-0111</fullName>
    </recommendedName>
</protein>
<feature type="signal peptide" evidence="2">
    <location>
        <begin position="1"/>
        <end position="20"/>
    </location>
</feature>
<feature type="propeptide" id="PRO_0000404846" evidence="1">
    <location>
        <begin position="21"/>
        <end position="44"/>
    </location>
</feature>
<feature type="peptide" id="PRO_0000404847" description="Conotoxin VnMSGL-0111">
    <location>
        <begin position="45"/>
        <end position="74"/>
    </location>
</feature>
<feature type="disulfide bond" evidence="1">
    <location>
        <begin position="48"/>
        <end position="60"/>
    </location>
</feature>
<feature type="disulfide bond" evidence="1">
    <location>
        <begin position="52"/>
        <end position="69"/>
    </location>
</feature>
<feature type="disulfide bond" evidence="1">
    <location>
        <begin position="59"/>
        <end position="73"/>
    </location>
</feature>
<proteinExistence type="evidence at transcript level"/>
<name>O3621_CONVE</name>
<reference key="1">
    <citation type="journal article" date="2001" name="Mol. Biol. Evol.">
        <title>Mechanisms for evolving hypervariability: the case of conopeptides.</title>
        <authorList>
            <person name="Conticello S.G."/>
            <person name="Gilad Y."/>
            <person name="Avidan N."/>
            <person name="Ben-Asher E."/>
            <person name="Levy Z."/>
            <person name="Fainzilber M."/>
        </authorList>
    </citation>
    <scope>NUCLEOTIDE SEQUENCE [MRNA]</scope>
    <source>
        <tissue>Venom duct</tissue>
    </source>
</reference>